<organism>
    <name type="scientific">Ureaplasma urealyticum serovar 10 (strain ATCC 33699 / Western)</name>
    <dbReference type="NCBI Taxonomy" id="565575"/>
    <lineage>
        <taxon>Bacteria</taxon>
        <taxon>Bacillati</taxon>
        <taxon>Mycoplasmatota</taxon>
        <taxon>Mycoplasmoidales</taxon>
        <taxon>Mycoplasmoidaceae</taxon>
        <taxon>Ureaplasma</taxon>
    </lineage>
</organism>
<keyword id="KW-0687">Ribonucleoprotein</keyword>
<keyword id="KW-0689">Ribosomal protein</keyword>
<keyword id="KW-0694">RNA-binding</keyword>
<keyword id="KW-0699">rRNA-binding</keyword>
<evidence type="ECO:0000255" key="1">
    <source>
        <dbReference type="HAMAP-Rule" id="MF_01367"/>
    </source>
</evidence>
<evidence type="ECO:0000305" key="2"/>
<feature type="chain" id="PRO_1000144348" description="Large ribosomal subunit protein uL14">
    <location>
        <begin position="1"/>
        <end position="122"/>
    </location>
</feature>
<proteinExistence type="inferred from homology"/>
<dbReference type="EMBL" id="CP001184">
    <property type="protein sequence ID" value="ACI60191.1"/>
    <property type="molecule type" value="Genomic_DNA"/>
</dbReference>
<dbReference type="RefSeq" id="WP_004026223.1">
    <property type="nucleotide sequence ID" value="NC_011374.1"/>
</dbReference>
<dbReference type="SMR" id="B5ZB50"/>
<dbReference type="STRING" id="565575.UUR10_0236"/>
<dbReference type="GeneID" id="93848716"/>
<dbReference type="KEGG" id="uue:UUR10_0236"/>
<dbReference type="eggNOG" id="COG0093">
    <property type="taxonomic scope" value="Bacteria"/>
</dbReference>
<dbReference type="HOGENOM" id="CLU_095071_2_1_14"/>
<dbReference type="OrthoDB" id="9806379at2"/>
<dbReference type="Proteomes" id="UP000002018">
    <property type="component" value="Chromosome"/>
</dbReference>
<dbReference type="GO" id="GO:0022625">
    <property type="term" value="C:cytosolic large ribosomal subunit"/>
    <property type="evidence" value="ECO:0007669"/>
    <property type="project" value="TreeGrafter"/>
</dbReference>
<dbReference type="GO" id="GO:0070180">
    <property type="term" value="F:large ribosomal subunit rRNA binding"/>
    <property type="evidence" value="ECO:0007669"/>
    <property type="project" value="TreeGrafter"/>
</dbReference>
<dbReference type="GO" id="GO:0003735">
    <property type="term" value="F:structural constituent of ribosome"/>
    <property type="evidence" value="ECO:0007669"/>
    <property type="project" value="InterPro"/>
</dbReference>
<dbReference type="GO" id="GO:0006412">
    <property type="term" value="P:translation"/>
    <property type="evidence" value="ECO:0007669"/>
    <property type="project" value="UniProtKB-UniRule"/>
</dbReference>
<dbReference type="CDD" id="cd00337">
    <property type="entry name" value="Ribosomal_uL14"/>
    <property type="match status" value="1"/>
</dbReference>
<dbReference type="FunFam" id="2.40.150.20:FF:000001">
    <property type="entry name" value="50S ribosomal protein L14"/>
    <property type="match status" value="1"/>
</dbReference>
<dbReference type="Gene3D" id="2.40.150.20">
    <property type="entry name" value="Ribosomal protein L14"/>
    <property type="match status" value="1"/>
</dbReference>
<dbReference type="HAMAP" id="MF_01367">
    <property type="entry name" value="Ribosomal_uL14"/>
    <property type="match status" value="1"/>
</dbReference>
<dbReference type="InterPro" id="IPR000218">
    <property type="entry name" value="Ribosomal_uL14"/>
</dbReference>
<dbReference type="InterPro" id="IPR005745">
    <property type="entry name" value="Ribosomal_uL14_bac-type"/>
</dbReference>
<dbReference type="InterPro" id="IPR019972">
    <property type="entry name" value="Ribosomal_uL14_CS"/>
</dbReference>
<dbReference type="InterPro" id="IPR036853">
    <property type="entry name" value="Ribosomal_uL14_sf"/>
</dbReference>
<dbReference type="NCBIfam" id="TIGR01067">
    <property type="entry name" value="rplN_bact"/>
    <property type="match status" value="1"/>
</dbReference>
<dbReference type="PANTHER" id="PTHR11761">
    <property type="entry name" value="50S/60S RIBOSOMAL PROTEIN L14/L23"/>
    <property type="match status" value="1"/>
</dbReference>
<dbReference type="PANTHER" id="PTHR11761:SF3">
    <property type="entry name" value="LARGE RIBOSOMAL SUBUNIT PROTEIN UL14M"/>
    <property type="match status" value="1"/>
</dbReference>
<dbReference type="Pfam" id="PF00238">
    <property type="entry name" value="Ribosomal_L14"/>
    <property type="match status" value="1"/>
</dbReference>
<dbReference type="SMART" id="SM01374">
    <property type="entry name" value="Ribosomal_L14"/>
    <property type="match status" value="1"/>
</dbReference>
<dbReference type="SUPFAM" id="SSF50193">
    <property type="entry name" value="Ribosomal protein L14"/>
    <property type="match status" value="1"/>
</dbReference>
<dbReference type="PROSITE" id="PS00049">
    <property type="entry name" value="RIBOSOMAL_L14"/>
    <property type="match status" value="1"/>
</dbReference>
<name>RL14_UREU1</name>
<protein>
    <recommendedName>
        <fullName evidence="1">Large ribosomal subunit protein uL14</fullName>
    </recommendedName>
    <alternativeName>
        <fullName evidence="2">50S ribosomal protein L14</fullName>
    </alternativeName>
</protein>
<gene>
    <name evidence="1" type="primary">rplN</name>
    <name type="ordered locus">UUR10_0236</name>
</gene>
<comment type="function">
    <text evidence="1">Binds to 23S rRNA. Forms part of two intersubunit bridges in the 70S ribosome.</text>
</comment>
<comment type="subunit">
    <text evidence="1">Part of the 50S ribosomal subunit. Forms a cluster with proteins L3 and L19. In the 70S ribosome, L14 and L19 interact and together make contacts with the 16S rRNA in bridges B5 and B8.</text>
</comment>
<comment type="similarity">
    <text evidence="1">Belongs to the universal ribosomal protein uL14 family.</text>
</comment>
<reference key="1">
    <citation type="submission" date="2008-10" db="EMBL/GenBank/DDBJ databases">
        <title>Genome sequence of Ureaplasma urealyticum serovar 10 ATCC-33699.</title>
        <authorList>
            <person name="Shrivastava S."/>
            <person name="Methe B.A."/>
            <person name="Glass J."/>
            <person name="White K."/>
            <person name="Duffy L.B."/>
        </authorList>
    </citation>
    <scope>NUCLEOTIDE SEQUENCE [LARGE SCALE GENOMIC DNA]</scope>
    <source>
        <strain>ATCC 33699 / Western</strain>
    </source>
</reference>
<accession>B5ZB50</accession>
<sequence length="122" mass="13243">MIQHMTRLKVADNTGAKEVGVIKVLGGSKKRYASVGDIVVVSVKKATPAGLIAKGQMAKAVIVRTKKSIRRESGLLIRFDENACVLIKEDKTPRGSRIFGPVAREIRDRGYTKIASLAPEVL</sequence>